<keyword id="KW-0687">Ribonucleoprotein</keyword>
<keyword id="KW-0689">Ribosomal protein</keyword>
<keyword id="KW-0694">RNA-binding</keyword>
<keyword id="KW-0699">rRNA-binding</keyword>
<name>RL2_MYCSS</name>
<feature type="chain" id="PRO_0000309961" description="Large ribosomal subunit protein uL2">
    <location>
        <begin position="1"/>
        <end position="278"/>
    </location>
</feature>
<feature type="region of interest" description="Disordered" evidence="2">
    <location>
        <begin position="27"/>
        <end position="58"/>
    </location>
</feature>
<feature type="region of interest" description="Disordered" evidence="2">
    <location>
        <begin position="224"/>
        <end position="278"/>
    </location>
</feature>
<feature type="compositionally biased region" description="Basic residues" evidence="2">
    <location>
        <begin position="37"/>
        <end position="58"/>
    </location>
</feature>
<feature type="compositionally biased region" description="Basic and acidic residues" evidence="2">
    <location>
        <begin position="253"/>
        <end position="268"/>
    </location>
</feature>
<feature type="compositionally biased region" description="Basic residues" evidence="2">
    <location>
        <begin position="269"/>
        <end position="278"/>
    </location>
</feature>
<gene>
    <name evidence="1" type="primary">rplB</name>
    <name type="ordered locus">Mmcs_1016</name>
</gene>
<protein>
    <recommendedName>
        <fullName evidence="1">Large ribosomal subunit protein uL2</fullName>
    </recommendedName>
    <alternativeName>
        <fullName evidence="3">50S ribosomal protein L2</fullName>
    </alternativeName>
</protein>
<sequence>MAIRKYKPTTPGRRGASVSDFAEITRSTPEKSLVRPLHGKGGRNAHGRITTRHKGGGHKRAYRVIDFRRHDKDGVDAKVAHIEYDPNRTANIALLHYLDGEKRYIIAPYGLKQGAIVESGANADIKPGNNLPLRNIPAGTVIHAVELRPGGGAKLARSAGVSIQLLGKEGSYASLRMPSGEIRRVDVRCRATVGEVGNAEQANINWGKAGRMRWKGKRPTVRGVVMNPVDHPHGGGEGKTSGGRHPVSPWGKPEGRTRKPNKPSDKLIVRRRRTGKKR</sequence>
<proteinExistence type="inferred from homology"/>
<dbReference type="EMBL" id="CP000384">
    <property type="protein sequence ID" value="ABG07130.1"/>
    <property type="molecule type" value="Genomic_DNA"/>
</dbReference>
<dbReference type="SMR" id="Q1BDA4"/>
<dbReference type="KEGG" id="mmc:Mmcs_1016"/>
<dbReference type="HOGENOM" id="CLU_036235_2_1_11"/>
<dbReference type="BioCyc" id="MSP164756:G1G6O-1040-MONOMER"/>
<dbReference type="GO" id="GO:0015934">
    <property type="term" value="C:large ribosomal subunit"/>
    <property type="evidence" value="ECO:0007669"/>
    <property type="project" value="InterPro"/>
</dbReference>
<dbReference type="GO" id="GO:0019843">
    <property type="term" value="F:rRNA binding"/>
    <property type="evidence" value="ECO:0007669"/>
    <property type="project" value="UniProtKB-UniRule"/>
</dbReference>
<dbReference type="GO" id="GO:0003735">
    <property type="term" value="F:structural constituent of ribosome"/>
    <property type="evidence" value="ECO:0007669"/>
    <property type="project" value="InterPro"/>
</dbReference>
<dbReference type="GO" id="GO:0016740">
    <property type="term" value="F:transferase activity"/>
    <property type="evidence" value="ECO:0007669"/>
    <property type="project" value="InterPro"/>
</dbReference>
<dbReference type="GO" id="GO:0002181">
    <property type="term" value="P:cytoplasmic translation"/>
    <property type="evidence" value="ECO:0007669"/>
    <property type="project" value="TreeGrafter"/>
</dbReference>
<dbReference type="FunFam" id="2.30.30.30:FF:000001">
    <property type="entry name" value="50S ribosomal protein L2"/>
    <property type="match status" value="1"/>
</dbReference>
<dbReference type="FunFam" id="2.40.50.140:FF:000003">
    <property type="entry name" value="50S ribosomal protein L2"/>
    <property type="match status" value="1"/>
</dbReference>
<dbReference type="FunFam" id="4.10.950.10:FF:000001">
    <property type="entry name" value="50S ribosomal protein L2"/>
    <property type="match status" value="1"/>
</dbReference>
<dbReference type="Gene3D" id="2.30.30.30">
    <property type="match status" value="1"/>
</dbReference>
<dbReference type="Gene3D" id="2.40.50.140">
    <property type="entry name" value="Nucleic acid-binding proteins"/>
    <property type="match status" value="1"/>
</dbReference>
<dbReference type="Gene3D" id="4.10.950.10">
    <property type="entry name" value="Ribosomal protein L2, domain 3"/>
    <property type="match status" value="1"/>
</dbReference>
<dbReference type="HAMAP" id="MF_01320_B">
    <property type="entry name" value="Ribosomal_uL2_B"/>
    <property type="match status" value="1"/>
</dbReference>
<dbReference type="InterPro" id="IPR012340">
    <property type="entry name" value="NA-bd_OB-fold"/>
</dbReference>
<dbReference type="InterPro" id="IPR014722">
    <property type="entry name" value="Rib_uL2_dom2"/>
</dbReference>
<dbReference type="InterPro" id="IPR002171">
    <property type="entry name" value="Ribosomal_uL2"/>
</dbReference>
<dbReference type="InterPro" id="IPR005880">
    <property type="entry name" value="Ribosomal_uL2_bac/org-type"/>
</dbReference>
<dbReference type="InterPro" id="IPR022669">
    <property type="entry name" value="Ribosomal_uL2_C"/>
</dbReference>
<dbReference type="InterPro" id="IPR022671">
    <property type="entry name" value="Ribosomal_uL2_CS"/>
</dbReference>
<dbReference type="InterPro" id="IPR014726">
    <property type="entry name" value="Ribosomal_uL2_dom3"/>
</dbReference>
<dbReference type="InterPro" id="IPR022666">
    <property type="entry name" value="Ribosomal_uL2_RNA-bd_dom"/>
</dbReference>
<dbReference type="InterPro" id="IPR008991">
    <property type="entry name" value="Translation_prot_SH3-like_sf"/>
</dbReference>
<dbReference type="NCBIfam" id="TIGR01171">
    <property type="entry name" value="rplB_bact"/>
    <property type="match status" value="1"/>
</dbReference>
<dbReference type="PANTHER" id="PTHR13691:SF5">
    <property type="entry name" value="LARGE RIBOSOMAL SUBUNIT PROTEIN UL2M"/>
    <property type="match status" value="1"/>
</dbReference>
<dbReference type="PANTHER" id="PTHR13691">
    <property type="entry name" value="RIBOSOMAL PROTEIN L2"/>
    <property type="match status" value="1"/>
</dbReference>
<dbReference type="Pfam" id="PF00181">
    <property type="entry name" value="Ribosomal_L2"/>
    <property type="match status" value="1"/>
</dbReference>
<dbReference type="Pfam" id="PF03947">
    <property type="entry name" value="Ribosomal_L2_C"/>
    <property type="match status" value="1"/>
</dbReference>
<dbReference type="PIRSF" id="PIRSF002158">
    <property type="entry name" value="Ribosomal_L2"/>
    <property type="match status" value="1"/>
</dbReference>
<dbReference type="SMART" id="SM01383">
    <property type="entry name" value="Ribosomal_L2"/>
    <property type="match status" value="1"/>
</dbReference>
<dbReference type="SMART" id="SM01382">
    <property type="entry name" value="Ribosomal_L2_C"/>
    <property type="match status" value="1"/>
</dbReference>
<dbReference type="SUPFAM" id="SSF50249">
    <property type="entry name" value="Nucleic acid-binding proteins"/>
    <property type="match status" value="1"/>
</dbReference>
<dbReference type="SUPFAM" id="SSF50104">
    <property type="entry name" value="Translation proteins SH3-like domain"/>
    <property type="match status" value="1"/>
</dbReference>
<dbReference type="PROSITE" id="PS00467">
    <property type="entry name" value="RIBOSOMAL_L2"/>
    <property type="match status" value="1"/>
</dbReference>
<accession>Q1BDA4</accession>
<comment type="function">
    <text evidence="1">One of the primary rRNA binding proteins. Required for association of the 30S and 50S subunits to form the 70S ribosome, for tRNA binding and peptide bond formation. It has been suggested to have peptidyltransferase activity; this is somewhat controversial. Makes several contacts with the 16S rRNA in the 70S ribosome.</text>
</comment>
<comment type="subunit">
    <text evidence="1">Part of the 50S ribosomal subunit. Forms a bridge to the 30S subunit in the 70S ribosome.</text>
</comment>
<comment type="similarity">
    <text evidence="1">Belongs to the universal ribosomal protein uL2 family.</text>
</comment>
<evidence type="ECO:0000255" key="1">
    <source>
        <dbReference type="HAMAP-Rule" id="MF_01320"/>
    </source>
</evidence>
<evidence type="ECO:0000256" key="2">
    <source>
        <dbReference type="SAM" id="MobiDB-lite"/>
    </source>
</evidence>
<evidence type="ECO:0000305" key="3"/>
<reference key="1">
    <citation type="submission" date="2006-06" db="EMBL/GenBank/DDBJ databases">
        <title>Complete sequence of chromosome of Mycobacterium sp. MCS.</title>
        <authorList>
            <consortium name="US DOE Joint Genome Institute"/>
            <person name="Copeland A."/>
            <person name="Lucas S."/>
            <person name="Lapidus A."/>
            <person name="Barry K."/>
            <person name="Detter J.C."/>
            <person name="Glavina del Rio T."/>
            <person name="Hammon N."/>
            <person name="Israni S."/>
            <person name="Dalin E."/>
            <person name="Tice H."/>
            <person name="Pitluck S."/>
            <person name="Martinez M."/>
            <person name="Schmutz J."/>
            <person name="Larimer F."/>
            <person name="Land M."/>
            <person name="Hauser L."/>
            <person name="Kyrpides N."/>
            <person name="Kim E."/>
            <person name="Miller C.D."/>
            <person name="Hughes J.E."/>
            <person name="Anderson A.J."/>
            <person name="Sims R.C."/>
            <person name="Richardson P."/>
        </authorList>
    </citation>
    <scope>NUCLEOTIDE SEQUENCE [LARGE SCALE GENOMIC DNA]</scope>
    <source>
        <strain>MCS</strain>
    </source>
</reference>
<organism>
    <name type="scientific">Mycobacterium sp. (strain MCS)</name>
    <dbReference type="NCBI Taxonomy" id="164756"/>
    <lineage>
        <taxon>Bacteria</taxon>
        <taxon>Bacillati</taxon>
        <taxon>Actinomycetota</taxon>
        <taxon>Actinomycetes</taxon>
        <taxon>Mycobacteriales</taxon>
        <taxon>Mycobacteriaceae</taxon>
        <taxon>Mycobacterium</taxon>
    </lineage>
</organism>